<keyword id="KW-0903">Direct protein sequencing</keyword>
<keyword id="KW-0964">Secreted</keyword>
<protein>
    <recommendedName>
        <fullName>Long neurotoxin F1</fullName>
    </recommendedName>
</protein>
<reference key="1">
    <citation type="journal article" date="2009" name="Toxicon">
        <title>Biochemical characterization of the Micrurus pyrrhocryptus venom.</title>
        <authorList>
            <person name="Dokmetjian J.C."/>
            <person name="Del Canto S."/>
            <person name="Vinzon S."/>
            <person name="de Jimenez Bonino M.B."/>
        </authorList>
    </citation>
    <scope>PROTEIN SEQUENCE</scope>
    <source>
        <tissue>Venom</tissue>
    </source>
</reference>
<proteinExistence type="evidence at protein level"/>
<organism>
    <name type="scientific">Micrurus pyrrhocryptus</name>
    <name type="common">Coral snake</name>
    <dbReference type="NCBI Taxonomy" id="129468"/>
    <lineage>
        <taxon>Eukaryota</taxon>
        <taxon>Metazoa</taxon>
        <taxon>Chordata</taxon>
        <taxon>Craniata</taxon>
        <taxon>Vertebrata</taxon>
        <taxon>Euteleostomi</taxon>
        <taxon>Lepidosauria</taxon>
        <taxon>Squamata</taxon>
        <taxon>Bifurcata</taxon>
        <taxon>Unidentata</taxon>
        <taxon>Episquamata</taxon>
        <taxon>Toxicofera</taxon>
        <taxon>Serpentes</taxon>
        <taxon>Colubroidea</taxon>
        <taxon>Elapidae</taxon>
        <taxon>Elapinae</taxon>
        <taxon>Micrurus</taxon>
    </lineage>
</organism>
<comment type="subcellular location">
    <subcellularLocation>
        <location>Secreted</location>
    </subcellularLocation>
</comment>
<comment type="tissue specificity">
    <text>Expressed by the venom gland.</text>
</comment>
<name>NXLF1_MICPY</name>
<accession>P0CAR6</accession>
<dbReference type="GO" id="GO:0005576">
    <property type="term" value="C:extracellular region"/>
    <property type="evidence" value="ECO:0007669"/>
    <property type="project" value="UniProtKB-SubCell"/>
</dbReference>
<feature type="chain" id="PRO_0000377752" description="Long neurotoxin F1">
    <location>
        <begin position="1"/>
        <end position="16" status="greater than"/>
    </location>
</feature>
<feature type="non-terminal residue">
    <location>
        <position position="16"/>
    </location>
</feature>
<sequence>LICYVSXDXEXAAAPP</sequence>